<sequence>MQVCWFERFGGGNQLLTVLSSSRTCYARFVNFKVFKRMENYRLRRNMPRTGPCKLLLPLSCGISSSVLLHILNAQIQHELAKSHPSPGFDLHLLVIEPSSISHSSLSYDEGFELLQQTFPLHSFTRIPLHSIFELDPELQEVISQFSKDGFVDDTGLSAKERLDAFRASIPTSTSKVDVDYILITRLVVAFAKKIACRGVLWGDTDTRLAAKTLANVAKGRGSSLTWQVCDGMSPFGVEFNFPLRDLFKAEVDNYASFFPELTRIIIPDEPPSENVLTKNLSIDELMMRYVQTQGEKYPGVMANVTRTASKLQASLMPANVPQCSFCGAFMLNSGNNDGGDTTGASRALELCYACIRSRPELTC</sequence>
<feature type="chain" id="PRO_0000369289" description="Cytoplasmic tRNA 2-thiolation protein 2">
    <location>
        <begin position="1"/>
        <end position="364"/>
    </location>
</feature>
<reference key="1">
    <citation type="journal article" date="2005" name="Nature">
        <title>Genomic sequence of the pathogenic and allergenic filamentous fungus Aspergillus fumigatus.</title>
        <authorList>
            <person name="Nierman W.C."/>
            <person name="Pain A."/>
            <person name="Anderson M.J."/>
            <person name="Wortman J.R."/>
            <person name="Kim H.S."/>
            <person name="Arroyo J."/>
            <person name="Berriman M."/>
            <person name="Abe K."/>
            <person name="Archer D.B."/>
            <person name="Bermejo C."/>
            <person name="Bennett J.W."/>
            <person name="Bowyer P."/>
            <person name="Chen D."/>
            <person name="Collins M."/>
            <person name="Coulsen R."/>
            <person name="Davies R."/>
            <person name="Dyer P.S."/>
            <person name="Farman M.L."/>
            <person name="Fedorova N."/>
            <person name="Fedorova N.D."/>
            <person name="Feldblyum T.V."/>
            <person name="Fischer R."/>
            <person name="Fosker N."/>
            <person name="Fraser A."/>
            <person name="Garcia J.L."/>
            <person name="Garcia M.J."/>
            <person name="Goble A."/>
            <person name="Goldman G.H."/>
            <person name="Gomi K."/>
            <person name="Griffith-Jones S."/>
            <person name="Gwilliam R."/>
            <person name="Haas B.J."/>
            <person name="Haas H."/>
            <person name="Harris D.E."/>
            <person name="Horiuchi H."/>
            <person name="Huang J."/>
            <person name="Humphray S."/>
            <person name="Jimenez J."/>
            <person name="Keller N."/>
            <person name="Khouri H."/>
            <person name="Kitamoto K."/>
            <person name="Kobayashi T."/>
            <person name="Konzack S."/>
            <person name="Kulkarni R."/>
            <person name="Kumagai T."/>
            <person name="Lafton A."/>
            <person name="Latge J.-P."/>
            <person name="Li W."/>
            <person name="Lord A."/>
            <person name="Lu C."/>
            <person name="Majoros W.H."/>
            <person name="May G.S."/>
            <person name="Miller B.L."/>
            <person name="Mohamoud Y."/>
            <person name="Molina M."/>
            <person name="Monod M."/>
            <person name="Mouyna I."/>
            <person name="Mulligan S."/>
            <person name="Murphy L.D."/>
            <person name="O'Neil S."/>
            <person name="Paulsen I."/>
            <person name="Penalva M.A."/>
            <person name="Pertea M."/>
            <person name="Price C."/>
            <person name="Pritchard B.L."/>
            <person name="Quail M.A."/>
            <person name="Rabbinowitsch E."/>
            <person name="Rawlins N."/>
            <person name="Rajandream M.A."/>
            <person name="Reichard U."/>
            <person name="Renauld H."/>
            <person name="Robson G.D."/>
            <person name="Rodriguez de Cordoba S."/>
            <person name="Rodriguez-Pena J.M."/>
            <person name="Ronning C.M."/>
            <person name="Rutter S."/>
            <person name="Salzberg S.L."/>
            <person name="Sanchez M."/>
            <person name="Sanchez-Ferrero J.C."/>
            <person name="Saunders D."/>
            <person name="Seeger K."/>
            <person name="Squares R."/>
            <person name="Squares S."/>
            <person name="Takeuchi M."/>
            <person name="Tekaia F."/>
            <person name="Turner G."/>
            <person name="Vazquez de Aldana C.R."/>
            <person name="Weidman J."/>
            <person name="White O."/>
            <person name="Woodward J.R."/>
            <person name="Yu J.-H."/>
            <person name="Fraser C.M."/>
            <person name="Galagan J.E."/>
            <person name="Asai K."/>
            <person name="Machida M."/>
            <person name="Hall N."/>
            <person name="Barrell B.G."/>
            <person name="Denning D.W."/>
        </authorList>
    </citation>
    <scope>NUCLEOTIDE SEQUENCE [LARGE SCALE GENOMIC DNA]</scope>
    <source>
        <strain>ATCC MYA-4609 / CBS 101355 / FGSC A1100 / Af293</strain>
    </source>
</reference>
<protein>
    <recommendedName>
        <fullName evidence="1">Cytoplasmic tRNA 2-thiolation protein 2</fullName>
    </recommendedName>
</protein>
<keyword id="KW-0963">Cytoplasm</keyword>
<keyword id="KW-1185">Reference proteome</keyword>
<keyword id="KW-0819">tRNA processing</keyword>
<evidence type="ECO:0000255" key="1">
    <source>
        <dbReference type="HAMAP-Rule" id="MF_03054"/>
    </source>
</evidence>
<comment type="function">
    <text evidence="1">Plays a central role in 2-thiolation of mcm(5)S(2)U at tRNA wobble positions of tRNA(Lys), tRNA(Glu) and tRNA(Gln). May act by forming a heterodimer with ncs6 that ligates sulfur from thiocarboxylated urm1 onto the uridine of tRNAs at wobble position. Prior mcm(5) tRNA modification by the elongator complex is required for 2-thiolation. May also be involved in protein urmylation.</text>
</comment>
<comment type="pathway">
    <text evidence="1">tRNA modification; 5-methoxycarbonylmethyl-2-thiouridine-tRNA biosynthesis.</text>
</comment>
<comment type="subcellular location">
    <subcellularLocation>
        <location evidence="1">Cytoplasm</location>
    </subcellularLocation>
</comment>
<comment type="similarity">
    <text evidence="1">Belongs to the CTU2/NCS2 family.</text>
</comment>
<gene>
    <name type="primary">ncs2</name>
    <name type="synonym">ctu2</name>
    <name type="ORF">AFUA_5G12400</name>
</gene>
<accession>Q4WVK2</accession>
<proteinExistence type="inferred from homology"/>
<dbReference type="EMBL" id="AAHF01000003">
    <property type="protein sequence ID" value="EAL91374.1"/>
    <property type="molecule type" value="Genomic_DNA"/>
</dbReference>
<dbReference type="RefSeq" id="XP_753412.1">
    <property type="nucleotide sequence ID" value="XM_748319.1"/>
</dbReference>
<dbReference type="FunCoup" id="Q4WVK2">
    <property type="interactions" value="173"/>
</dbReference>
<dbReference type="STRING" id="330879.Q4WVK2"/>
<dbReference type="EnsemblFungi" id="EAL91374">
    <property type="protein sequence ID" value="EAL91374"/>
    <property type="gene ID" value="AFUA_5G12400"/>
</dbReference>
<dbReference type="GeneID" id="3511355"/>
<dbReference type="KEGG" id="afm:AFUA_5G12400"/>
<dbReference type="eggNOG" id="KOG2594">
    <property type="taxonomic scope" value="Eukaryota"/>
</dbReference>
<dbReference type="HOGENOM" id="CLU_024534_3_0_1"/>
<dbReference type="InParanoid" id="Q4WVK2"/>
<dbReference type="OMA" id="EGDSTWA"/>
<dbReference type="OrthoDB" id="25129at2759"/>
<dbReference type="UniPathway" id="UPA00988"/>
<dbReference type="Proteomes" id="UP000002530">
    <property type="component" value="Chromosome 5"/>
</dbReference>
<dbReference type="GO" id="GO:0005829">
    <property type="term" value="C:cytosol"/>
    <property type="evidence" value="ECO:0000250"/>
    <property type="project" value="UniProtKB"/>
</dbReference>
<dbReference type="GO" id="GO:0016779">
    <property type="term" value="F:nucleotidyltransferase activity"/>
    <property type="evidence" value="ECO:0007669"/>
    <property type="project" value="UniProtKB-UniRule"/>
</dbReference>
<dbReference type="GO" id="GO:0016783">
    <property type="term" value="F:sulfurtransferase activity"/>
    <property type="evidence" value="ECO:0000318"/>
    <property type="project" value="GO_Central"/>
</dbReference>
<dbReference type="GO" id="GO:0000049">
    <property type="term" value="F:tRNA binding"/>
    <property type="evidence" value="ECO:0007669"/>
    <property type="project" value="InterPro"/>
</dbReference>
<dbReference type="GO" id="GO:0032447">
    <property type="term" value="P:protein urmylation"/>
    <property type="evidence" value="ECO:0007669"/>
    <property type="project" value="UniProtKB-UniRule"/>
</dbReference>
<dbReference type="GO" id="GO:0034227">
    <property type="term" value="P:tRNA thio-modification"/>
    <property type="evidence" value="ECO:0000250"/>
    <property type="project" value="UniProtKB"/>
</dbReference>
<dbReference type="GO" id="GO:0002143">
    <property type="term" value="P:tRNA wobble position uridine thiolation"/>
    <property type="evidence" value="ECO:0000318"/>
    <property type="project" value="GO_Central"/>
</dbReference>
<dbReference type="GO" id="GO:0002098">
    <property type="term" value="P:tRNA wobble uridine modification"/>
    <property type="evidence" value="ECO:0000250"/>
    <property type="project" value="UniProtKB"/>
</dbReference>
<dbReference type="FunFam" id="3.40.50.620:FF:000143">
    <property type="entry name" value="Cytoplasmic tRNA 2-thiolation protein 2"/>
    <property type="match status" value="1"/>
</dbReference>
<dbReference type="Gene3D" id="3.40.50.620">
    <property type="entry name" value="HUPs"/>
    <property type="match status" value="1"/>
</dbReference>
<dbReference type="HAMAP" id="MF_03054">
    <property type="entry name" value="CTU2"/>
    <property type="match status" value="1"/>
</dbReference>
<dbReference type="InterPro" id="IPR019407">
    <property type="entry name" value="CTU2"/>
</dbReference>
<dbReference type="InterPro" id="IPR014729">
    <property type="entry name" value="Rossmann-like_a/b/a_fold"/>
</dbReference>
<dbReference type="PANTHER" id="PTHR20882">
    <property type="entry name" value="CYTOPLASMIC TRNA 2-THIOLATION PROTEIN 2"/>
    <property type="match status" value="1"/>
</dbReference>
<dbReference type="PANTHER" id="PTHR20882:SF14">
    <property type="entry name" value="CYTOPLASMIC TRNA 2-THIOLATION PROTEIN 2"/>
    <property type="match status" value="1"/>
</dbReference>
<dbReference type="Pfam" id="PF10288">
    <property type="entry name" value="CTU2"/>
    <property type="match status" value="1"/>
</dbReference>
<dbReference type="SUPFAM" id="SSF52402">
    <property type="entry name" value="Adenine nucleotide alpha hydrolases-like"/>
    <property type="match status" value="1"/>
</dbReference>
<name>CTU2_ASPFU</name>
<organism>
    <name type="scientific">Aspergillus fumigatus (strain ATCC MYA-4609 / CBS 101355 / FGSC A1100 / Af293)</name>
    <name type="common">Neosartorya fumigata</name>
    <dbReference type="NCBI Taxonomy" id="330879"/>
    <lineage>
        <taxon>Eukaryota</taxon>
        <taxon>Fungi</taxon>
        <taxon>Dikarya</taxon>
        <taxon>Ascomycota</taxon>
        <taxon>Pezizomycotina</taxon>
        <taxon>Eurotiomycetes</taxon>
        <taxon>Eurotiomycetidae</taxon>
        <taxon>Eurotiales</taxon>
        <taxon>Aspergillaceae</taxon>
        <taxon>Aspergillus</taxon>
        <taxon>Aspergillus subgen. Fumigati</taxon>
    </lineage>
</organism>